<evidence type="ECO:0000255" key="1">
    <source>
        <dbReference type="HAMAP-Rule" id="MF_01217"/>
    </source>
</evidence>
<evidence type="ECO:0000255" key="2">
    <source>
        <dbReference type="PROSITE-ProRule" id="PRU00258"/>
    </source>
</evidence>
<reference key="1">
    <citation type="journal article" date="2005" name="Nucleic Acids Res.">
        <title>Genome dynamics and diversity of Shigella species, the etiologic agents of bacillary dysentery.</title>
        <authorList>
            <person name="Yang F."/>
            <person name="Yang J."/>
            <person name="Zhang X."/>
            <person name="Chen L."/>
            <person name="Jiang Y."/>
            <person name="Yan Y."/>
            <person name="Tang X."/>
            <person name="Wang J."/>
            <person name="Xiong Z."/>
            <person name="Dong J."/>
            <person name="Xue Y."/>
            <person name="Zhu Y."/>
            <person name="Xu X."/>
            <person name="Sun L."/>
            <person name="Chen S."/>
            <person name="Nie H."/>
            <person name="Peng J."/>
            <person name="Xu J."/>
            <person name="Wang Y."/>
            <person name="Yuan Z."/>
            <person name="Wen Y."/>
            <person name="Yao Z."/>
            <person name="Shen Y."/>
            <person name="Qiang B."/>
            <person name="Hou Y."/>
            <person name="Yu J."/>
            <person name="Jin Q."/>
        </authorList>
    </citation>
    <scope>NUCLEOTIDE SEQUENCE [LARGE SCALE GENOMIC DNA]</scope>
    <source>
        <strain>Sb227</strain>
    </source>
</reference>
<feature type="chain" id="PRO_1000066689" description="Acyl carrier protein">
    <location>
        <begin position="1"/>
        <end position="78"/>
    </location>
</feature>
<feature type="domain" description="Carrier" evidence="2">
    <location>
        <begin position="2"/>
        <end position="77"/>
    </location>
</feature>
<feature type="modified residue" description="O-(pantetheine 4'-phosphoryl)serine" evidence="2">
    <location>
        <position position="37"/>
    </location>
</feature>
<accession>Q31ZE9</accession>
<name>ACP_SHIBS</name>
<protein>
    <recommendedName>
        <fullName evidence="1">Acyl carrier protein</fullName>
        <shortName evidence="1">ACP</shortName>
    </recommendedName>
</protein>
<comment type="function">
    <text evidence="1">Carrier of the growing fatty acid chain in fatty acid biosynthesis.</text>
</comment>
<comment type="pathway">
    <text evidence="1">Lipid metabolism; fatty acid biosynthesis.</text>
</comment>
<comment type="subcellular location">
    <subcellularLocation>
        <location evidence="1">Cytoplasm</location>
    </subcellularLocation>
</comment>
<comment type="PTM">
    <text evidence="1">4'-phosphopantetheine is transferred from CoA to a specific serine of apo-ACP by AcpS. This modification is essential for activity because fatty acids are bound in thioester linkage to the sulfhydryl of the prosthetic group.</text>
</comment>
<comment type="similarity">
    <text evidence="1">Belongs to the acyl carrier protein (ACP) family.</text>
</comment>
<keyword id="KW-0963">Cytoplasm</keyword>
<keyword id="KW-0275">Fatty acid biosynthesis</keyword>
<keyword id="KW-0276">Fatty acid metabolism</keyword>
<keyword id="KW-0444">Lipid biosynthesis</keyword>
<keyword id="KW-0443">Lipid metabolism</keyword>
<keyword id="KW-0596">Phosphopantetheine</keyword>
<keyword id="KW-0597">Phosphoprotein</keyword>
<organism>
    <name type="scientific">Shigella boydii serotype 4 (strain Sb227)</name>
    <dbReference type="NCBI Taxonomy" id="300268"/>
    <lineage>
        <taxon>Bacteria</taxon>
        <taxon>Pseudomonadati</taxon>
        <taxon>Pseudomonadota</taxon>
        <taxon>Gammaproteobacteria</taxon>
        <taxon>Enterobacterales</taxon>
        <taxon>Enterobacteriaceae</taxon>
        <taxon>Shigella</taxon>
    </lineage>
</organism>
<gene>
    <name evidence="1" type="primary">acpP</name>
    <name type="ordered locus">SBO_1969</name>
</gene>
<dbReference type="EMBL" id="CP000036">
    <property type="protein sequence ID" value="ABB66559.1"/>
    <property type="molecule type" value="Genomic_DNA"/>
</dbReference>
<dbReference type="RefSeq" id="WP_000103754.1">
    <property type="nucleotide sequence ID" value="NC_007613.1"/>
</dbReference>
<dbReference type="SMR" id="Q31ZE9"/>
<dbReference type="GeneID" id="98387866"/>
<dbReference type="KEGG" id="sbo:SBO_1969"/>
<dbReference type="HOGENOM" id="CLU_108696_5_1_6"/>
<dbReference type="UniPathway" id="UPA00094"/>
<dbReference type="Proteomes" id="UP000007067">
    <property type="component" value="Chromosome"/>
</dbReference>
<dbReference type="GO" id="GO:0005829">
    <property type="term" value="C:cytosol"/>
    <property type="evidence" value="ECO:0007669"/>
    <property type="project" value="TreeGrafter"/>
</dbReference>
<dbReference type="GO" id="GO:0016020">
    <property type="term" value="C:membrane"/>
    <property type="evidence" value="ECO:0007669"/>
    <property type="project" value="GOC"/>
</dbReference>
<dbReference type="GO" id="GO:0000035">
    <property type="term" value="F:acyl binding"/>
    <property type="evidence" value="ECO:0007669"/>
    <property type="project" value="TreeGrafter"/>
</dbReference>
<dbReference type="GO" id="GO:0000036">
    <property type="term" value="F:acyl carrier activity"/>
    <property type="evidence" value="ECO:0007669"/>
    <property type="project" value="UniProtKB-UniRule"/>
</dbReference>
<dbReference type="GO" id="GO:0009245">
    <property type="term" value="P:lipid A biosynthetic process"/>
    <property type="evidence" value="ECO:0007669"/>
    <property type="project" value="TreeGrafter"/>
</dbReference>
<dbReference type="FunFam" id="1.10.1200.10:FF:000001">
    <property type="entry name" value="Acyl carrier protein"/>
    <property type="match status" value="1"/>
</dbReference>
<dbReference type="Gene3D" id="1.10.1200.10">
    <property type="entry name" value="ACP-like"/>
    <property type="match status" value="1"/>
</dbReference>
<dbReference type="HAMAP" id="MF_01217">
    <property type="entry name" value="Acyl_carrier"/>
    <property type="match status" value="1"/>
</dbReference>
<dbReference type="InterPro" id="IPR003231">
    <property type="entry name" value="ACP"/>
</dbReference>
<dbReference type="InterPro" id="IPR036736">
    <property type="entry name" value="ACP-like_sf"/>
</dbReference>
<dbReference type="InterPro" id="IPR009081">
    <property type="entry name" value="PP-bd_ACP"/>
</dbReference>
<dbReference type="InterPro" id="IPR006162">
    <property type="entry name" value="Ppantetheine_attach_site"/>
</dbReference>
<dbReference type="NCBIfam" id="TIGR00517">
    <property type="entry name" value="acyl_carrier"/>
    <property type="match status" value="1"/>
</dbReference>
<dbReference type="NCBIfam" id="NF002148">
    <property type="entry name" value="PRK00982.1-2"/>
    <property type="match status" value="1"/>
</dbReference>
<dbReference type="NCBIfam" id="NF002149">
    <property type="entry name" value="PRK00982.1-3"/>
    <property type="match status" value="1"/>
</dbReference>
<dbReference type="NCBIfam" id="NF002150">
    <property type="entry name" value="PRK00982.1-4"/>
    <property type="match status" value="1"/>
</dbReference>
<dbReference type="NCBIfam" id="NF002151">
    <property type="entry name" value="PRK00982.1-5"/>
    <property type="match status" value="1"/>
</dbReference>
<dbReference type="PANTHER" id="PTHR20863">
    <property type="entry name" value="ACYL CARRIER PROTEIN"/>
    <property type="match status" value="1"/>
</dbReference>
<dbReference type="PANTHER" id="PTHR20863:SF76">
    <property type="entry name" value="CARRIER DOMAIN-CONTAINING PROTEIN"/>
    <property type="match status" value="1"/>
</dbReference>
<dbReference type="Pfam" id="PF00550">
    <property type="entry name" value="PP-binding"/>
    <property type="match status" value="1"/>
</dbReference>
<dbReference type="SUPFAM" id="SSF47336">
    <property type="entry name" value="ACP-like"/>
    <property type="match status" value="1"/>
</dbReference>
<dbReference type="PROSITE" id="PS50075">
    <property type="entry name" value="CARRIER"/>
    <property type="match status" value="1"/>
</dbReference>
<dbReference type="PROSITE" id="PS00012">
    <property type="entry name" value="PHOSPHOPANTETHEINE"/>
    <property type="match status" value="1"/>
</dbReference>
<sequence length="78" mass="8640">MSTIEERVKKIIGEQLGVKQEEVTNNASFVEDLGADSLDTVELVMALEEEFDTEIPDEEAEKITTVQAAIDYINGHQA</sequence>
<proteinExistence type="inferred from homology"/>